<organism>
    <name type="scientific">Escherichia coli (strain K12)</name>
    <dbReference type="NCBI Taxonomy" id="83333"/>
    <lineage>
        <taxon>Bacteria</taxon>
        <taxon>Pseudomonadati</taxon>
        <taxon>Pseudomonadota</taxon>
        <taxon>Gammaproteobacteria</taxon>
        <taxon>Enterobacterales</taxon>
        <taxon>Enterobacteriaceae</taxon>
        <taxon>Escherichia</taxon>
    </lineage>
</organism>
<keyword id="KW-0238">DNA-binding</keyword>
<keyword id="KW-1185">Reference proteome</keyword>
<keyword id="KW-0804">Transcription</keyword>
<keyword id="KW-0805">Transcription regulation</keyword>
<sequence length="300" mass="34397">MANLYDLKKFDLNLLVIFECIYQHLSISKAAESLYITPSAVSQSLQRLRAQFNDPLFIRSGKGIAPTTTGLNLHHHLEKNLRGLEQTINIVNKSELKKNFIIYGPQLISCSNNSMLIRCLRQDSSVEIECHDILMSAENAEELLVHRKADLVITQMPVISRSVICMPLHTIRNTLICSNRHPRITDNSTYEQIMAEEFTQLISKSAGVDDIQMEIDERFMNRKISFRGSSLLTIINSIAVTDLLGIVPYELYNSYRDFLNLKEIKLEHPLPSIKLYISYNKSSLNNLVFSRFIDRLNESF</sequence>
<dbReference type="EMBL" id="U82598">
    <property type="protein sequence ID" value="AAB40804.1"/>
    <property type="molecule type" value="Genomic_DNA"/>
</dbReference>
<dbReference type="EMBL" id="U00096">
    <property type="protein sequence ID" value="AAC73704.1"/>
    <property type="molecule type" value="Genomic_DNA"/>
</dbReference>
<dbReference type="EMBL" id="AP009048">
    <property type="protein sequence ID" value="BAA35233.1"/>
    <property type="molecule type" value="Genomic_DNA"/>
</dbReference>
<dbReference type="PIR" id="A64794">
    <property type="entry name" value="A64794"/>
</dbReference>
<dbReference type="RefSeq" id="NP_415136.1">
    <property type="nucleotide sequence ID" value="NC_000913.3"/>
</dbReference>
<dbReference type="SMR" id="P77746"/>
<dbReference type="BioGRID" id="4260901">
    <property type="interactions" value="92"/>
</dbReference>
<dbReference type="BioGRID" id="849601">
    <property type="interactions" value="1"/>
</dbReference>
<dbReference type="FunCoup" id="P77746">
    <property type="interactions" value="32"/>
</dbReference>
<dbReference type="IntAct" id="P77746">
    <property type="interactions" value="5"/>
</dbReference>
<dbReference type="STRING" id="511145.b0603"/>
<dbReference type="PaxDb" id="511145-b0603"/>
<dbReference type="DNASU" id="945216"/>
<dbReference type="EnsemblBacteria" id="AAC73704">
    <property type="protein sequence ID" value="AAC73704"/>
    <property type="gene ID" value="b0603"/>
</dbReference>
<dbReference type="GeneID" id="945216"/>
<dbReference type="KEGG" id="ecj:JW0596"/>
<dbReference type="KEGG" id="eco:b0603"/>
<dbReference type="KEGG" id="ecoc:C3026_03015"/>
<dbReference type="PATRIC" id="fig|1411691.4.peg.1665"/>
<dbReference type="EchoBASE" id="EB3305"/>
<dbReference type="eggNOG" id="COG0583">
    <property type="taxonomic scope" value="Bacteria"/>
</dbReference>
<dbReference type="HOGENOM" id="CLU_039613_39_5_6"/>
<dbReference type="InParanoid" id="P77746"/>
<dbReference type="OMA" id="VHPLFTE"/>
<dbReference type="OrthoDB" id="6413555at2"/>
<dbReference type="PhylomeDB" id="P77746"/>
<dbReference type="BioCyc" id="EcoCyc:G6332-MONOMER"/>
<dbReference type="PRO" id="PR:P77746"/>
<dbReference type="Proteomes" id="UP000000625">
    <property type="component" value="Chromosome"/>
</dbReference>
<dbReference type="GO" id="GO:0003677">
    <property type="term" value="F:DNA binding"/>
    <property type="evidence" value="ECO:0007669"/>
    <property type="project" value="UniProtKB-KW"/>
</dbReference>
<dbReference type="GO" id="GO:0003700">
    <property type="term" value="F:DNA-binding transcription factor activity"/>
    <property type="evidence" value="ECO:0007669"/>
    <property type="project" value="InterPro"/>
</dbReference>
<dbReference type="GO" id="GO:0006355">
    <property type="term" value="P:regulation of DNA-templated transcription"/>
    <property type="evidence" value="ECO:0000318"/>
    <property type="project" value="GO_Central"/>
</dbReference>
<dbReference type="Gene3D" id="3.40.190.10">
    <property type="entry name" value="Periplasmic binding protein-like II"/>
    <property type="match status" value="2"/>
</dbReference>
<dbReference type="Gene3D" id="1.10.10.10">
    <property type="entry name" value="Winged helix-like DNA-binding domain superfamily/Winged helix DNA-binding domain"/>
    <property type="match status" value="1"/>
</dbReference>
<dbReference type="InterPro" id="IPR050389">
    <property type="entry name" value="LysR-type_TF"/>
</dbReference>
<dbReference type="InterPro" id="IPR005119">
    <property type="entry name" value="LysR_subst-bd"/>
</dbReference>
<dbReference type="InterPro" id="IPR000847">
    <property type="entry name" value="Tscrpt_reg_HTH_LysR"/>
</dbReference>
<dbReference type="InterPro" id="IPR036388">
    <property type="entry name" value="WH-like_DNA-bd_sf"/>
</dbReference>
<dbReference type="InterPro" id="IPR036390">
    <property type="entry name" value="WH_DNA-bd_sf"/>
</dbReference>
<dbReference type="NCBIfam" id="NF047710">
    <property type="entry name" value="TransRegCitRGProt"/>
    <property type="match status" value="1"/>
</dbReference>
<dbReference type="PANTHER" id="PTHR30118">
    <property type="entry name" value="HTH-TYPE TRANSCRIPTIONAL REGULATOR LEUO-RELATED"/>
    <property type="match status" value="1"/>
</dbReference>
<dbReference type="PANTHER" id="PTHR30118:SF14">
    <property type="entry name" value="LYSR FAMILY TRANSCRIPTIONAL REGULATOR"/>
    <property type="match status" value="1"/>
</dbReference>
<dbReference type="Pfam" id="PF00126">
    <property type="entry name" value="HTH_1"/>
    <property type="match status" value="1"/>
</dbReference>
<dbReference type="Pfam" id="PF03466">
    <property type="entry name" value="LysR_substrate"/>
    <property type="match status" value="1"/>
</dbReference>
<dbReference type="PRINTS" id="PR00039">
    <property type="entry name" value="HTHLYSR"/>
</dbReference>
<dbReference type="SUPFAM" id="SSF53850">
    <property type="entry name" value="Periplasmic binding protein-like II"/>
    <property type="match status" value="1"/>
</dbReference>
<dbReference type="SUPFAM" id="SSF46785">
    <property type="entry name" value="Winged helix' DNA-binding domain"/>
    <property type="match status" value="1"/>
</dbReference>
<dbReference type="PROSITE" id="PS50931">
    <property type="entry name" value="HTH_LYSR"/>
    <property type="match status" value="1"/>
</dbReference>
<comment type="induction">
    <text evidence="2 3">Induced by LeuO, a monocistronic operon (PubMed:19429622). Maximally induced in early stationary phase, repressed by H-NS via 2 binding sites in the upstream and coding region; H-NS may bind both regions to form a bridge which then prevents transcription (PubMed:26789284).</text>
</comment>
<comment type="miscellaneous">
    <text evidence="5">The protein is quite variable across different genetic subgroups, probably due to its binding and repression by H-NS (PubMed:26789284).</text>
</comment>
<comment type="similarity">
    <text evidence="4">Belongs to the LysR transcriptional regulatory family.</text>
</comment>
<evidence type="ECO:0000255" key="1">
    <source>
        <dbReference type="PROSITE-ProRule" id="PRU00253"/>
    </source>
</evidence>
<evidence type="ECO:0000269" key="2">
    <source>
    </source>
</evidence>
<evidence type="ECO:0000269" key="3">
    <source>
    </source>
</evidence>
<evidence type="ECO:0000305" key="4"/>
<evidence type="ECO:0000305" key="5">
    <source>
    </source>
</evidence>
<feature type="chain" id="PRO_0000105778" description="Uncharacterized HTH-type transcriptional regulator YbdO">
    <location>
        <begin position="1"/>
        <end position="300"/>
    </location>
</feature>
<feature type="domain" description="HTH lysR-type" evidence="1">
    <location>
        <begin position="10"/>
        <end position="67"/>
    </location>
</feature>
<feature type="DNA-binding region" description="H-T-H motif" evidence="1">
    <location>
        <begin position="27"/>
        <end position="46"/>
    </location>
</feature>
<reference key="1">
    <citation type="journal article" date="1996" name="DNA Res.">
        <title>A 718-kb DNA sequence of the Escherichia coli K-12 genome corresponding to the 12.7-28.0 min region on the linkage map.</title>
        <authorList>
            <person name="Oshima T."/>
            <person name="Aiba H."/>
            <person name="Baba T."/>
            <person name="Fujita K."/>
            <person name="Hayashi K."/>
            <person name="Honjo A."/>
            <person name="Ikemoto K."/>
            <person name="Inada T."/>
            <person name="Itoh T."/>
            <person name="Kajihara M."/>
            <person name="Kanai K."/>
            <person name="Kashimoto K."/>
            <person name="Kimura S."/>
            <person name="Kitagawa M."/>
            <person name="Makino K."/>
            <person name="Masuda S."/>
            <person name="Miki T."/>
            <person name="Mizobuchi K."/>
            <person name="Mori H."/>
            <person name="Motomura K."/>
            <person name="Nakamura Y."/>
            <person name="Nashimoto H."/>
            <person name="Nishio Y."/>
            <person name="Saito N."/>
            <person name="Sampei G."/>
            <person name="Seki Y."/>
            <person name="Tagami H."/>
            <person name="Takemoto K."/>
            <person name="Wada C."/>
            <person name="Yamamoto Y."/>
            <person name="Yano M."/>
            <person name="Horiuchi T."/>
        </authorList>
    </citation>
    <scope>NUCLEOTIDE SEQUENCE [LARGE SCALE GENOMIC DNA]</scope>
    <source>
        <strain>K12 / W3110 / ATCC 27325 / DSM 5911</strain>
    </source>
</reference>
<reference key="2">
    <citation type="submission" date="1997-01" db="EMBL/GenBank/DDBJ databases">
        <title>Sequence of minutes 4-25 of Escherichia coli.</title>
        <authorList>
            <person name="Chung E."/>
            <person name="Allen E."/>
            <person name="Araujo R."/>
            <person name="Aparicio A.M."/>
            <person name="Davis K."/>
            <person name="Duncan M."/>
            <person name="Federspiel N."/>
            <person name="Hyman R."/>
            <person name="Kalman S."/>
            <person name="Komp C."/>
            <person name="Kurdi O."/>
            <person name="Lew H."/>
            <person name="Lin D."/>
            <person name="Namath A."/>
            <person name="Oefner P."/>
            <person name="Roberts D."/>
            <person name="Schramm S."/>
            <person name="Davis R.W."/>
        </authorList>
    </citation>
    <scope>NUCLEOTIDE SEQUENCE [LARGE SCALE GENOMIC DNA]</scope>
    <source>
        <strain>K12 / MG1655 / ATCC 47076</strain>
    </source>
</reference>
<reference key="3">
    <citation type="journal article" date="1997" name="Science">
        <title>The complete genome sequence of Escherichia coli K-12.</title>
        <authorList>
            <person name="Blattner F.R."/>
            <person name="Plunkett G. III"/>
            <person name="Bloch C.A."/>
            <person name="Perna N.T."/>
            <person name="Burland V."/>
            <person name="Riley M."/>
            <person name="Collado-Vides J."/>
            <person name="Glasner J.D."/>
            <person name="Rode C.K."/>
            <person name="Mayhew G.F."/>
            <person name="Gregor J."/>
            <person name="Davis N.W."/>
            <person name="Kirkpatrick H.A."/>
            <person name="Goeden M.A."/>
            <person name="Rose D.J."/>
            <person name="Mau B."/>
            <person name="Shao Y."/>
        </authorList>
    </citation>
    <scope>NUCLEOTIDE SEQUENCE [LARGE SCALE GENOMIC DNA]</scope>
    <source>
        <strain>K12 / MG1655 / ATCC 47076</strain>
    </source>
</reference>
<reference key="4">
    <citation type="journal article" date="2006" name="Mol. Syst. Biol.">
        <title>Highly accurate genome sequences of Escherichia coli K-12 strains MG1655 and W3110.</title>
        <authorList>
            <person name="Hayashi K."/>
            <person name="Morooka N."/>
            <person name="Yamamoto Y."/>
            <person name="Fujita K."/>
            <person name="Isono K."/>
            <person name="Choi S."/>
            <person name="Ohtsubo E."/>
            <person name="Baba T."/>
            <person name="Wanner B.L."/>
            <person name="Mori H."/>
            <person name="Horiuchi T."/>
        </authorList>
    </citation>
    <scope>NUCLEOTIDE SEQUENCE [LARGE SCALE GENOMIC DNA]</scope>
    <source>
        <strain>K12 / W3110 / ATCC 27325 / DSM 5911</strain>
    </source>
</reference>
<reference key="5">
    <citation type="journal article" date="2009" name="J. Bacteriol.">
        <title>Involvement of the leucine response transcription factor LeuO in regulation of the genes for sulfa drug efflux.</title>
        <authorList>
            <person name="Shimada T."/>
            <person name="Yamamoto K."/>
            <person name="Ishihama A."/>
        </authorList>
    </citation>
    <scope>OPERON STRUCTURE</scope>
    <scope>INDUCTION</scope>
    <source>
        <strain>K12 / BW25113</strain>
    </source>
</reference>
<reference key="6">
    <citation type="journal article" date="2016" name="PLoS Genet.">
        <title>H-NS facilitates sequence diversification of horizontally transferred DNAs during their integration in host chromosomes.</title>
        <authorList>
            <person name="Higashi K."/>
            <person name="Tobe T."/>
            <person name="Kanai A."/>
            <person name="Uyar E."/>
            <person name="Ishikawa S."/>
            <person name="Suzuki Y."/>
            <person name="Ogasawara N."/>
            <person name="Kurokawa K."/>
            <person name="Oshima T."/>
        </authorList>
    </citation>
    <scope>INDUCTION</scope>
    <source>
        <strain>K12 / W3110 / ATCC 27325 / DSM 5911</strain>
    </source>
</reference>
<name>YBDO_ECOLI</name>
<protein>
    <recommendedName>
        <fullName>Uncharacterized HTH-type transcriptional regulator YbdO</fullName>
    </recommendedName>
</protein>
<accession>P77746</accession>
<gene>
    <name type="primary">ybdO</name>
    <name type="ordered locus">b0603</name>
    <name type="ordered locus">JW0596</name>
</gene>
<proteinExistence type="evidence at transcript level"/>